<accession>Q6DFF2</accession>
<accession>A8WE75</accession>
<reference key="1">
    <citation type="journal article" date="2008" name="Dev. Dyn.">
        <title>Brd4 associates with mitotic chromosomes throughout early zebrafish embryogenesis.</title>
        <authorList>
            <person name="Toyama R."/>
            <person name="Rebbert M.L."/>
            <person name="Dey A."/>
            <person name="Ozato K."/>
            <person name="Dawid I.B."/>
        </authorList>
    </citation>
    <scope>NUCLEOTIDE SEQUENCE [MRNA]</scope>
</reference>
<reference key="2">
    <citation type="submission" date="2004-07" db="EMBL/GenBank/DDBJ databases">
        <authorList>
            <consortium name="NIH - Xenopus Gene Collection (XGC) project"/>
        </authorList>
    </citation>
    <scope>NUCLEOTIDE SEQUENCE [LARGE SCALE MRNA]</scope>
    <source>
        <tissue>Oocyte</tissue>
    </source>
</reference>
<keyword id="KW-0103">Bromodomain</keyword>
<keyword id="KW-0156">Chromatin regulator</keyword>
<keyword id="KW-0158">Chromosome</keyword>
<keyword id="KW-0539">Nucleus</keyword>
<keyword id="KW-1185">Reference proteome</keyword>
<keyword id="KW-0677">Repeat</keyword>
<keyword id="KW-0804">Transcription</keyword>
<keyword id="KW-0805">Transcription regulation</keyword>
<proteinExistence type="evidence at transcript level"/>
<protein>
    <recommendedName>
        <fullName>Bromodomain-containing protein 4B</fullName>
    </recommendedName>
</protein>
<feature type="chain" id="PRO_0000423296" description="Bromodomain-containing protein 4B">
    <location>
        <begin position="1"/>
        <end position="1362"/>
    </location>
</feature>
<feature type="domain" description="Bromo 1" evidence="3">
    <location>
        <begin position="57"/>
        <end position="163"/>
    </location>
</feature>
<feature type="domain" description="Bromo 2" evidence="3">
    <location>
        <begin position="365"/>
        <end position="474"/>
    </location>
</feature>
<feature type="domain" description="NET" evidence="4">
    <location>
        <begin position="623"/>
        <end position="707"/>
    </location>
</feature>
<feature type="region of interest" description="Disordered" evidence="5">
    <location>
        <begin position="22"/>
        <end position="57"/>
    </location>
</feature>
<feature type="region of interest" description="Disordered" evidence="5">
    <location>
        <begin position="200"/>
        <end position="243"/>
    </location>
</feature>
<feature type="region of interest" description="Disordered" evidence="5">
    <location>
        <begin position="274"/>
        <end position="367"/>
    </location>
</feature>
<feature type="region of interest" description="Disordered" evidence="5">
    <location>
        <begin position="476"/>
        <end position="639"/>
    </location>
</feature>
<feature type="region of interest" description="NPS region" evidence="1">
    <location>
        <begin position="503"/>
        <end position="521"/>
    </location>
</feature>
<feature type="region of interest" description="BID region" evidence="1">
    <location>
        <begin position="542"/>
        <end position="597"/>
    </location>
</feature>
<feature type="region of interest" description="Disordered" evidence="5">
    <location>
        <begin position="699"/>
        <end position="941"/>
    </location>
</feature>
<feature type="region of interest" description="Disordered" evidence="5">
    <location>
        <begin position="953"/>
        <end position="1349"/>
    </location>
</feature>
<feature type="region of interest" description="C-terminal (CTD) region" evidence="1">
    <location>
        <begin position="1061"/>
        <end position="1361"/>
    </location>
</feature>
<feature type="compositionally biased region" description="Pro residues" evidence="5">
    <location>
        <begin position="34"/>
        <end position="49"/>
    </location>
</feature>
<feature type="compositionally biased region" description="Pro residues" evidence="5">
    <location>
        <begin position="219"/>
        <end position="234"/>
    </location>
</feature>
<feature type="compositionally biased region" description="Basic and acidic residues" evidence="5">
    <location>
        <begin position="326"/>
        <end position="342"/>
    </location>
</feature>
<feature type="compositionally biased region" description="Pro residues" evidence="5">
    <location>
        <begin position="348"/>
        <end position="358"/>
    </location>
</feature>
<feature type="compositionally biased region" description="Pro residues" evidence="5">
    <location>
        <begin position="481"/>
        <end position="503"/>
    </location>
</feature>
<feature type="compositionally biased region" description="Low complexity" evidence="5">
    <location>
        <begin position="504"/>
        <end position="516"/>
    </location>
</feature>
<feature type="compositionally biased region" description="Basic residues" evidence="5">
    <location>
        <begin position="553"/>
        <end position="568"/>
    </location>
</feature>
<feature type="compositionally biased region" description="Basic and acidic residues" evidence="5">
    <location>
        <begin position="569"/>
        <end position="585"/>
    </location>
</feature>
<feature type="compositionally biased region" description="Pro residues" evidence="5">
    <location>
        <begin position="606"/>
        <end position="621"/>
    </location>
</feature>
<feature type="compositionally biased region" description="Basic and acidic residues" evidence="5">
    <location>
        <begin position="628"/>
        <end position="639"/>
    </location>
</feature>
<feature type="compositionally biased region" description="Low complexity" evidence="5">
    <location>
        <begin position="722"/>
        <end position="737"/>
    </location>
</feature>
<feature type="compositionally biased region" description="Basic residues" evidence="5">
    <location>
        <begin position="750"/>
        <end position="766"/>
    </location>
</feature>
<feature type="compositionally biased region" description="Pro residues" evidence="5">
    <location>
        <begin position="772"/>
        <end position="793"/>
    </location>
</feature>
<feature type="compositionally biased region" description="Pro residues" evidence="5">
    <location>
        <begin position="871"/>
        <end position="889"/>
    </location>
</feature>
<feature type="compositionally biased region" description="Basic residues" evidence="5">
    <location>
        <begin position="893"/>
        <end position="905"/>
    </location>
</feature>
<feature type="compositionally biased region" description="Polar residues" evidence="5">
    <location>
        <begin position="926"/>
        <end position="941"/>
    </location>
</feature>
<feature type="compositionally biased region" description="Low complexity" evidence="5">
    <location>
        <begin position="953"/>
        <end position="963"/>
    </location>
</feature>
<feature type="compositionally biased region" description="Low complexity" evidence="5">
    <location>
        <begin position="977"/>
        <end position="1006"/>
    </location>
</feature>
<feature type="compositionally biased region" description="Low complexity" evidence="5">
    <location>
        <begin position="1014"/>
        <end position="1028"/>
    </location>
</feature>
<feature type="compositionally biased region" description="Low complexity" evidence="5">
    <location>
        <begin position="1041"/>
        <end position="1050"/>
    </location>
</feature>
<feature type="compositionally biased region" description="Pro residues" evidence="5">
    <location>
        <begin position="1086"/>
        <end position="1099"/>
    </location>
</feature>
<feature type="compositionally biased region" description="Basic and acidic residues" evidence="5">
    <location>
        <begin position="1186"/>
        <end position="1207"/>
    </location>
</feature>
<feature type="compositionally biased region" description="Polar residues" evidence="5">
    <location>
        <begin position="1224"/>
        <end position="1234"/>
    </location>
</feature>
<feature type="compositionally biased region" description="Basic and acidic residues" evidence="5">
    <location>
        <begin position="1236"/>
        <end position="1293"/>
    </location>
</feature>
<feature type="compositionally biased region" description="Low complexity" evidence="5">
    <location>
        <begin position="1308"/>
        <end position="1319"/>
    </location>
</feature>
<feature type="compositionally biased region" description="Basic and acidic residues" evidence="5">
    <location>
        <begin position="1322"/>
        <end position="1334"/>
    </location>
</feature>
<feature type="site" description="Acetylated histone binding" evidence="2">
    <location>
        <position position="139"/>
    </location>
</feature>
<feature type="site" description="Acetylated histone binding" evidence="2">
    <location>
        <position position="450"/>
    </location>
</feature>
<feature type="sequence conflict" description="In Ref. 1; ABW97743." evidence="6" ref="1">
    <original>P</original>
    <variation>S</variation>
    <location>
        <position position="209"/>
    </location>
</feature>
<feature type="sequence conflict" description="In Ref. 1; ABW97743." evidence="6" ref="1">
    <original>S</original>
    <variation>T</variation>
    <location>
        <position position="256"/>
    </location>
</feature>
<feature type="sequence conflict" description="In Ref. 1; ABW97743." evidence="6" ref="1">
    <original>Q</original>
    <variation>P</variation>
    <location>
        <position position="333"/>
    </location>
</feature>
<feature type="sequence conflict" description="In Ref. 1; ABW97743." evidence="6" ref="1">
    <original>S</original>
    <variation>P</variation>
    <location>
        <position position="984"/>
    </location>
</feature>
<feature type="sequence conflict" description="In Ref. 1; ABW97743." evidence="6" ref="1">
    <original>P</original>
    <variation>PQQQ</variation>
    <location>
        <position position="1012"/>
    </location>
</feature>
<feature type="sequence conflict" description="In Ref. 1; ABW97743." evidence="6" ref="1">
    <original>M</original>
    <variation>MS</variation>
    <location>
        <position position="1269"/>
    </location>
</feature>
<dbReference type="EMBL" id="EU236153">
    <property type="protein sequence ID" value="ABW97743.1"/>
    <property type="molecule type" value="mRNA"/>
</dbReference>
<dbReference type="EMBL" id="BC076786">
    <property type="protein sequence ID" value="AAH76786.1"/>
    <property type="molecule type" value="mRNA"/>
</dbReference>
<dbReference type="RefSeq" id="NP_001086546.1">
    <property type="nucleotide sequence ID" value="NM_001093077.1"/>
</dbReference>
<dbReference type="SMR" id="Q6DFF2"/>
<dbReference type="BioGRID" id="103241">
    <property type="interactions" value="1"/>
</dbReference>
<dbReference type="IntAct" id="Q6DFF2">
    <property type="interactions" value="1"/>
</dbReference>
<dbReference type="DNASU" id="446381"/>
<dbReference type="AGR" id="Xenbase:XB-GENE-5859154"/>
<dbReference type="Xenbase" id="XB-GENE-5859154">
    <property type="gene designation" value="brd4.L"/>
</dbReference>
<dbReference type="Proteomes" id="UP000186698">
    <property type="component" value="Unplaced"/>
</dbReference>
<dbReference type="Bgee" id="446381">
    <property type="expression patterns" value="Expressed in egg cell and 19 other cell types or tissues"/>
</dbReference>
<dbReference type="GO" id="GO:0000785">
    <property type="term" value="C:chromatin"/>
    <property type="evidence" value="ECO:0000318"/>
    <property type="project" value="GO_Central"/>
</dbReference>
<dbReference type="GO" id="GO:0005634">
    <property type="term" value="C:nucleus"/>
    <property type="evidence" value="ECO:0000250"/>
    <property type="project" value="UniProtKB"/>
</dbReference>
<dbReference type="GO" id="GO:0070577">
    <property type="term" value="F:lysine-acetylated histone binding"/>
    <property type="evidence" value="ECO:0000318"/>
    <property type="project" value="GO_Central"/>
</dbReference>
<dbReference type="GO" id="GO:0002039">
    <property type="term" value="F:p53 binding"/>
    <property type="evidence" value="ECO:0000250"/>
    <property type="project" value="UniProtKB"/>
</dbReference>
<dbReference type="GO" id="GO:0000976">
    <property type="term" value="F:transcription cis-regulatory region binding"/>
    <property type="evidence" value="ECO:0000250"/>
    <property type="project" value="UniProtKB"/>
</dbReference>
<dbReference type="GO" id="GO:0006338">
    <property type="term" value="P:chromatin remodeling"/>
    <property type="evidence" value="ECO:0000318"/>
    <property type="project" value="GO_Central"/>
</dbReference>
<dbReference type="GO" id="GO:0043123">
    <property type="term" value="P:positive regulation of canonical NF-kappaB signal transduction"/>
    <property type="evidence" value="ECO:0000250"/>
    <property type="project" value="UniProtKB"/>
</dbReference>
<dbReference type="GO" id="GO:2000330">
    <property type="term" value="P:positive regulation of T-helper 17 cell lineage commitment"/>
    <property type="evidence" value="ECO:0000250"/>
    <property type="project" value="UniProtKB"/>
</dbReference>
<dbReference type="GO" id="GO:0045944">
    <property type="term" value="P:positive regulation of transcription by RNA polymerase II"/>
    <property type="evidence" value="ECO:0000250"/>
    <property type="project" value="UniProtKB"/>
</dbReference>
<dbReference type="GO" id="GO:0032968">
    <property type="term" value="P:positive regulation of transcription elongation by RNA polymerase II"/>
    <property type="evidence" value="ECO:0000250"/>
    <property type="project" value="UniProtKB"/>
</dbReference>
<dbReference type="GO" id="GO:0006355">
    <property type="term" value="P:regulation of DNA-templated transcription"/>
    <property type="evidence" value="ECO:0000318"/>
    <property type="project" value="GO_Central"/>
</dbReference>
<dbReference type="GO" id="GO:0050727">
    <property type="term" value="P:regulation of inflammatory response"/>
    <property type="evidence" value="ECO:0000250"/>
    <property type="project" value="UniProtKB"/>
</dbReference>
<dbReference type="CDD" id="cd05497">
    <property type="entry name" value="Bromo_Brdt_I_like"/>
    <property type="match status" value="1"/>
</dbReference>
<dbReference type="CDD" id="cd05498">
    <property type="entry name" value="Bromo_Brdt_II_like"/>
    <property type="match status" value="1"/>
</dbReference>
<dbReference type="FunFam" id="1.20.920.10:FF:000003">
    <property type="entry name" value="Bromodomain-containing protein 2"/>
    <property type="match status" value="1"/>
</dbReference>
<dbReference type="FunFam" id="1.20.1270.220:FF:000001">
    <property type="entry name" value="bromodomain-containing protein 2 isoform X1"/>
    <property type="match status" value="1"/>
</dbReference>
<dbReference type="FunFam" id="1.20.920.10:FF:000002">
    <property type="entry name" value="Bromodomain-containing protein 4"/>
    <property type="match status" value="1"/>
</dbReference>
<dbReference type="Gene3D" id="1.20.1270.220">
    <property type="match status" value="1"/>
</dbReference>
<dbReference type="Gene3D" id="1.20.920.10">
    <property type="entry name" value="Bromodomain-like"/>
    <property type="match status" value="2"/>
</dbReference>
<dbReference type="InterPro" id="IPR031354">
    <property type="entry name" value="BRD4_CDT"/>
</dbReference>
<dbReference type="InterPro" id="IPR043508">
    <property type="entry name" value="Bromo_Brdt_I"/>
</dbReference>
<dbReference type="InterPro" id="IPR043509">
    <property type="entry name" value="Bromo_Brdt_II"/>
</dbReference>
<dbReference type="InterPro" id="IPR050935">
    <property type="entry name" value="Bromo_chromatin_reader"/>
</dbReference>
<dbReference type="InterPro" id="IPR001487">
    <property type="entry name" value="Bromodomain"/>
</dbReference>
<dbReference type="InterPro" id="IPR036427">
    <property type="entry name" value="Bromodomain-like_sf"/>
</dbReference>
<dbReference type="InterPro" id="IPR018359">
    <property type="entry name" value="Bromodomain_CS"/>
</dbReference>
<dbReference type="InterPro" id="IPR027353">
    <property type="entry name" value="NET_dom"/>
</dbReference>
<dbReference type="InterPro" id="IPR038336">
    <property type="entry name" value="NET_sf"/>
</dbReference>
<dbReference type="PANTHER" id="PTHR22880:SF143">
    <property type="entry name" value="BROMODOMAIN-CONTAINING PROTEIN 4"/>
    <property type="match status" value="1"/>
</dbReference>
<dbReference type="PANTHER" id="PTHR22880">
    <property type="entry name" value="FALZ-RELATED BROMODOMAIN-CONTAINING PROTEINS"/>
    <property type="match status" value="1"/>
</dbReference>
<dbReference type="Pfam" id="PF17035">
    <property type="entry name" value="BET"/>
    <property type="match status" value="1"/>
</dbReference>
<dbReference type="Pfam" id="PF17105">
    <property type="entry name" value="BRD4_CDT"/>
    <property type="match status" value="1"/>
</dbReference>
<dbReference type="Pfam" id="PF00439">
    <property type="entry name" value="Bromodomain"/>
    <property type="match status" value="2"/>
</dbReference>
<dbReference type="PRINTS" id="PR00503">
    <property type="entry name" value="BROMODOMAIN"/>
</dbReference>
<dbReference type="SMART" id="SM00297">
    <property type="entry name" value="BROMO"/>
    <property type="match status" value="2"/>
</dbReference>
<dbReference type="SUPFAM" id="SSF47370">
    <property type="entry name" value="Bromodomain"/>
    <property type="match status" value="2"/>
</dbReference>
<dbReference type="PROSITE" id="PS00633">
    <property type="entry name" value="BROMODOMAIN_1"/>
    <property type="match status" value="1"/>
</dbReference>
<dbReference type="PROSITE" id="PS50014">
    <property type="entry name" value="BROMODOMAIN_2"/>
    <property type="match status" value="2"/>
</dbReference>
<dbReference type="PROSITE" id="PS51525">
    <property type="entry name" value="NET"/>
    <property type="match status" value="1"/>
</dbReference>
<evidence type="ECO:0000250" key="1"/>
<evidence type="ECO:0000250" key="2">
    <source>
        <dbReference type="UniProtKB" id="O60885"/>
    </source>
</evidence>
<evidence type="ECO:0000255" key="3">
    <source>
        <dbReference type="PROSITE-ProRule" id="PRU00035"/>
    </source>
</evidence>
<evidence type="ECO:0000255" key="4">
    <source>
        <dbReference type="PROSITE-ProRule" id="PRU00857"/>
    </source>
</evidence>
<evidence type="ECO:0000256" key="5">
    <source>
        <dbReference type="SAM" id="MobiDB-lite"/>
    </source>
</evidence>
<evidence type="ECO:0000305" key="6"/>
<comment type="function">
    <text evidence="2">Chromatin reader protein that recognizes and binds acetylated histones and plays a key role in transmission of epigenetic memory across cell divisions and transcription regulation. Remains associated with acetylated chromatin throughout the entire cell cycle and provides epigenetic memory for postmitotic G1 gene transcription by preserving acetylated chromatin status and maintaining high-order chromatin structure. During interphase, plays a key role in regulating the transcription of signal-inducible genes by associating with the P-TEFb complex and recruiting it to promoters (By similarity).</text>
</comment>
<comment type="subcellular location">
    <subcellularLocation>
        <location evidence="2">Nucleus</location>
    </subcellularLocation>
    <subcellularLocation>
        <location evidence="2">Chromosome</location>
    </subcellularLocation>
    <text evidence="2">Associates with acetylated chromatin.</text>
</comment>
<comment type="domain">
    <text evidence="2">The 2 bromo domains mediate specific binding to acetylated histones. The exact combination of modified histone tails required to recruit brd4 to target genes is still unclear. The first bromo domain has high affinity for acetylated histone H4 tail, whereas the second bromo domain recognizes multiply acetylated marks in histone H3 (By similarity).</text>
</comment>
<comment type="similarity">
    <text evidence="6">Belongs to the BET family.</text>
</comment>
<name>BRD4B_XENLA</name>
<organism>
    <name type="scientific">Xenopus laevis</name>
    <name type="common">African clawed frog</name>
    <dbReference type="NCBI Taxonomy" id="8355"/>
    <lineage>
        <taxon>Eukaryota</taxon>
        <taxon>Metazoa</taxon>
        <taxon>Chordata</taxon>
        <taxon>Craniata</taxon>
        <taxon>Vertebrata</taxon>
        <taxon>Euteleostomi</taxon>
        <taxon>Amphibia</taxon>
        <taxon>Batrachia</taxon>
        <taxon>Anura</taxon>
        <taxon>Pipoidea</taxon>
        <taxon>Pipidae</taxon>
        <taxon>Xenopodinae</taxon>
        <taxon>Xenopus</taxon>
        <taxon>Xenopus</taxon>
    </lineage>
</organism>
<gene>
    <name type="primary">brd4-b</name>
</gene>
<sequence>MSAETGLGTRLRATSVMGDGVEGAQMSGQQQPAQPQPQTPMMQTPPPEIARPNQPKRQTNQLQYLLKTVLKTLWKHQFAWPFQVPVDVVKLNLPDYYKIIKTPMDMGTIKKRLENHFYWNAQECIQDFNTMFTNCYIYNKPGDDIVLMAEALEKLFLQKISEMPQEETELAVVQCKGRGRARKEQDASITPMRTRVLSGSLGDKSAVKPPVTPVSKPATPTPPAVIRAPTPPQTKPQQAHPPAITQAPISFSPIISQDVVVPTTVVPTPVPQPLANHPAVIHTAAQPAKTKKGVKRKADTTTPTTHDPLHESSPLPSDPKPPKAGPRKESGRQIRPIKKTEVPDSQLPAPPDLHPQPAPIAEKDSKTSEQLRYCAGIVREMFSKKHQAYAWPFYKPVDVETLGLHDYCEIIKHPMDLGTIKVKMENCDYKNAQDFASDVRLMFSNCYKYNPPDHEVVIMARKLQDVFEMRFAKMPDEPEEAPAPVPSPAPGPPAPSIKIPPPTSSDTSSDSSSDSESSSDSEEERAQRLAELQEQLKAVHEQLAALSQPQPNKPKKKEREKRKEKHKRKEEVEETRKGRIREPPAKKPKKSVQVSGGTPSIKKEAPPPVTRPARPAPPPAPCESSEEDTQRCRPMSYEEKRQLSLDINKLPGEKLGRVVHIIQSREPSLKNSNPDEIEIDFETLKPSTLRELERYVTSCLRKKRKPQDKIEAPTSGIVKVKSYSSSESESSSESSTSDSEESDPETAPNQKKKGHSGRESRKHHHPMQQPLIAPPPVMKPPSPTLAPSYPPPSSLDSSHPSLHHPLHPANVFEAVMQLPPDLPPHLAGQTEHCSPPHLNQHALTSPPALHNAMPQQPSRPSNRAAALPTKPARPPSASPPLPPPQPHHQPPAHVHHHHHHHHHAQPPHVLLEDDGPPSPHTGLPSYLQQLHKSQQPPTQSPIHSLLTTVKVQSQAPMAAPAQSMRHHQPLVYPPPSSSASPAPSPASSHIHQMQSPPVVPQQQPAGQAPPPPQQQQQQQQQQQHPALQGTLVSSHQHHVQHQQAKQQQVIQHHHHHHPSPRQQKQETYPGGHLREAPSPLLLHSPQVPPYPGLTHPPSPQSVQPKKQEMRGALVLQPQPLVMKEDKRHSPSVRPEGFSPGMRPEPPKVPEVLKGPSHIQPRPDLKPMDGGRPVRPPDQSLPPQGMPEKEKQKQEPKTPVAPKKDLKIKNMGSWAGLMQKPPVTPTSAGKSTSDSFELFRRQAREKEERERALKHQAEQAERMRREQERMRTREDDDVQDQTRKAHEEARRRQEQQQQQQQQHVQSNLPAAPSPAQSSQPIMDQREMARKREQERRRRQAMAPSIDMNFQSELMEIFEQNLFS</sequence>